<accession>O25514</accession>
<sequence length="219" mass="23897">MFDADCLKLMFVAGSQDFYHIKGGKNDRINALLDTLELALQSKITAFQFRQKGDLALQDPTQIKQLAMKCQKLCQKYGAPFIVNDEVQLALELKADGVHVGQEDMAIEEVITLCKKRQFIGLSVNTLEQALKARHLDAVAYLGVGPIFPTPSKKDKQVVGVELLKKIKDSGIKKPLIAIGGITMHNAPKLREYGGIAVISAIAQAKDKALAVGKLLNNA</sequence>
<name>THIE_HELPY</name>
<comment type="function">
    <text evidence="1">Condenses 4-methyl-5-(beta-hydroxyethyl)thiazole monophosphate (THZ-P) and 2-methyl-4-amino-5-hydroxymethyl pyrimidine pyrophosphate (HMP-PP) to form thiamine monophosphate (TMP).</text>
</comment>
<comment type="catalytic activity">
    <reaction evidence="1">
        <text>2-[(2R,5Z)-2-carboxy-4-methylthiazol-5(2H)-ylidene]ethyl phosphate + 4-amino-2-methyl-5-(diphosphooxymethyl)pyrimidine + 2 H(+) = thiamine phosphate + CO2 + diphosphate</text>
        <dbReference type="Rhea" id="RHEA:47844"/>
        <dbReference type="ChEBI" id="CHEBI:15378"/>
        <dbReference type="ChEBI" id="CHEBI:16526"/>
        <dbReference type="ChEBI" id="CHEBI:33019"/>
        <dbReference type="ChEBI" id="CHEBI:37575"/>
        <dbReference type="ChEBI" id="CHEBI:57841"/>
        <dbReference type="ChEBI" id="CHEBI:62899"/>
        <dbReference type="EC" id="2.5.1.3"/>
    </reaction>
</comment>
<comment type="catalytic activity">
    <reaction evidence="1">
        <text>2-(2-carboxy-4-methylthiazol-5-yl)ethyl phosphate + 4-amino-2-methyl-5-(diphosphooxymethyl)pyrimidine + 2 H(+) = thiamine phosphate + CO2 + diphosphate</text>
        <dbReference type="Rhea" id="RHEA:47848"/>
        <dbReference type="ChEBI" id="CHEBI:15378"/>
        <dbReference type="ChEBI" id="CHEBI:16526"/>
        <dbReference type="ChEBI" id="CHEBI:33019"/>
        <dbReference type="ChEBI" id="CHEBI:37575"/>
        <dbReference type="ChEBI" id="CHEBI:57841"/>
        <dbReference type="ChEBI" id="CHEBI:62890"/>
        <dbReference type="EC" id="2.5.1.3"/>
    </reaction>
</comment>
<comment type="catalytic activity">
    <reaction evidence="1">
        <text>4-methyl-5-(2-phosphooxyethyl)-thiazole + 4-amino-2-methyl-5-(diphosphooxymethyl)pyrimidine + H(+) = thiamine phosphate + diphosphate</text>
        <dbReference type="Rhea" id="RHEA:22328"/>
        <dbReference type="ChEBI" id="CHEBI:15378"/>
        <dbReference type="ChEBI" id="CHEBI:33019"/>
        <dbReference type="ChEBI" id="CHEBI:37575"/>
        <dbReference type="ChEBI" id="CHEBI:57841"/>
        <dbReference type="ChEBI" id="CHEBI:58296"/>
        <dbReference type="EC" id="2.5.1.3"/>
    </reaction>
</comment>
<comment type="cofactor">
    <cofactor evidence="1">
        <name>Mg(2+)</name>
        <dbReference type="ChEBI" id="CHEBI:18420"/>
    </cofactor>
    <text evidence="1">Binds 1 Mg(2+) ion per subunit.</text>
</comment>
<comment type="pathway">
    <text evidence="1">Cofactor biosynthesis; thiamine diphosphate biosynthesis; thiamine phosphate from 4-amino-2-methyl-5-diphosphomethylpyrimidine and 4-methyl-5-(2-phosphoethyl)-thiazole: step 1/1.</text>
</comment>
<comment type="similarity">
    <text evidence="1">Belongs to the thiamine-phosphate synthase family.</text>
</comment>
<protein>
    <recommendedName>
        <fullName evidence="1">Thiamine-phosphate synthase</fullName>
        <shortName evidence="1">TP synthase</shortName>
        <shortName evidence="1">TPS</shortName>
        <ecNumber evidence="1">2.5.1.3</ecNumber>
    </recommendedName>
    <alternativeName>
        <fullName evidence="1">Thiamine-phosphate pyrophosphorylase</fullName>
        <shortName evidence="1">TMP pyrophosphorylase</shortName>
        <shortName evidence="1">TMP-PPase</shortName>
    </alternativeName>
</protein>
<evidence type="ECO:0000255" key="1">
    <source>
        <dbReference type="HAMAP-Rule" id="MF_00097"/>
    </source>
</evidence>
<dbReference type="EC" id="2.5.1.3" evidence="1"/>
<dbReference type="EMBL" id="AE000511">
    <property type="protein sequence ID" value="AAD07889.1"/>
    <property type="molecule type" value="Genomic_DNA"/>
</dbReference>
<dbReference type="PIR" id="C64625">
    <property type="entry name" value="C64625"/>
</dbReference>
<dbReference type="RefSeq" id="NP_207636.1">
    <property type="nucleotide sequence ID" value="NC_000915.1"/>
</dbReference>
<dbReference type="RefSeq" id="WP_000458912.1">
    <property type="nucleotide sequence ID" value="NC_018939.1"/>
</dbReference>
<dbReference type="SMR" id="O25514"/>
<dbReference type="FunCoup" id="O25514">
    <property type="interactions" value="314"/>
</dbReference>
<dbReference type="STRING" id="85962.HP_0843"/>
<dbReference type="PaxDb" id="85962-C694_04320"/>
<dbReference type="EnsemblBacteria" id="AAD07889">
    <property type="protein sequence ID" value="AAD07889"/>
    <property type="gene ID" value="HP_0843"/>
</dbReference>
<dbReference type="KEGG" id="heo:C694_04320"/>
<dbReference type="KEGG" id="hpy:HP_0843"/>
<dbReference type="PATRIC" id="fig|85962.47.peg.897"/>
<dbReference type="eggNOG" id="COG0352">
    <property type="taxonomic scope" value="Bacteria"/>
</dbReference>
<dbReference type="InParanoid" id="O25514"/>
<dbReference type="OrthoDB" id="9810880at2"/>
<dbReference type="PhylomeDB" id="O25514"/>
<dbReference type="UniPathway" id="UPA00060">
    <property type="reaction ID" value="UER00141"/>
</dbReference>
<dbReference type="Proteomes" id="UP000000429">
    <property type="component" value="Chromosome"/>
</dbReference>
<dbReference type="GO" id="GO:0005737">
    <property type="term" value="C:cytoplasm"/>
    <property type="evidence" value="ECO:0000318"/>
    <property type="project" value="GO_Central"/>
</dbReference>
<dbReference type="GO" id="GO:0000287">
    <property type="term" value="F:magnesium ion binding"/>
    <property type="evidence" value="ECO:0007669"/>
    <property type="project" value="UniProtKB-UniRule"/>
</dbReference>
<dbReference type="GO" id="GO:0004789">
    <property type="term" value="F:thiamine-phosphate diphosphorylase activity"/>
    <property type="evidence" value="ECO:0000318"/>
    <property type="project" value="GO_Central"/>
</dbReference>
<dbReference type="GO" id="GO:0009228">
    <property type="term" value="P:thiamine biosynthetic process"/>
    <property type="evidence" value="ECO:0000318"/>
    <property type="project" value="GO_Central"/>
</dbReference>
<dbReference type="GO" id="GO:0009229">
    <property type="term" value="P:thiamine diphosphate biosynthetic process"/>
    <property type="evidence" value="ECO:0007669"/>
    <property type="project" value="UniProtKB-UniRule"/>
</dbReference>
<dbReference type="CDD" id="cd00564">
    <property type="entry name" value="TMP_TenI"/>
    <property type="match status" value="1"/>
</dbReference>
<dbReference type="FunFam" id="3.20.20.70:FF:000096">
    <property type="entry name" value="Thiamine-phosphate synthase"/>
    <property type="match status" value="1"/>
</dbReference>
<dbReference type="Gene3D" id="3.20.20.70">
    <property type="entry name" value="Aldolase class I"/>
    <property type="match status" value="1"/>
</dbReference>
<dbReference type="HAMAP" id="MF_00097">
    <property type="entry name" value="TMP_synthase"/>
    <property type="match status" value="1"/>
</dbReference>
<dbReference type="InterPro" id="IPR013785">
    <property type="entry name" value="Aldolase_TIM"/>
</dbReference>
<dbReference type="InterPro" id="IPR036206">
    <property type="entry name" value="ThiamineP_synth_sf"/>
</dbReference>
<dbReference type="InterPro" id="IPR022998">
    <property type="entry name" value="ThiamineP_synth_TenI"/>
</dbReference>
<dbReference type="InterPro" id="IPR034291">
    <property type="entry name" value="TMP_synthase"/>
</dbReference>
<dbReference type="NCBIfam" id="TIGR00693">
    <property type="entry name" value="thiE"/>
    <property type="match status" value="1"/>
</dbReference>
<dbReference type="PANTHER" id="PTHR20857">
    <property type="entry name" value="THIAMINE-PHOSPHATE PYROPHOSPHORYLASE"/>
    <property type="match status" value="1"/>
</dbReference>
<dbReference type="PANTHER" id="PTHR20857:SF15">
    <property type="entry name" value="THIAMINE-PHOSPHATE SYNTHASE"/>
    <property type="match status" value="1"/>
</dbReference>
<dbReference type="Pfam" id="PF02581">
    <property type="entry name" value="TMP-TENI"/>
    <property type="match status" value="1"/>
</dbReference>
<dbReference type="SUPFAM" id="SSF51391">
    <property type="entry name" value="Thiamin phosphate synthase"/>
    <property type="match status" value="1"/>
</dbReference>
<keyword id="KW-0460">Magnesium</keyword>
<keyword id="KW-0479">Metal-binding</keyword>
<keyword id="KW-1185">Reference proteome</keyword>
<keyword id="KW-0784">Thiamine biosynthesis</keyword>
<keyword id="KW-0808">Transferase</keyword>
<gene>
    <name evidence="1" type="primary">thiE</name>
    <name type="ordered locus">HP_0843</name>
</gene>
<organism>
    <name type="scientific">Helicobacter pylori (strain ATCC 700392 / 26695)</name>
    <name type="common">Campylobacter pylori</name>
    <dbReference type="NCBI Taxonomy" id="85962"/>
    <lineage>
        <taxon>Bacteria</taxon>
        <taxon>Pseudomonadati</taxon>
        <taxon>Campylobacterota</taxon>
        <taxon>Epsilonproteobacteria</taxon>
        <taxon>Campylobacterales</taxon>
        <taxon>Helicobacteraceae</taxon>
        <taxon>Helicobacter</taxon>
    </lineage>
</organism>
<feature type="chain" id="PRO_0000157017" description="Thiamine-phosphate synthase">
    <location>
        <begin position="1"/>
        <end position="219"/>
    </location>
</feature>
<feature type="binding site" evidence="1">
    <location>
        <begin position="48"/>
        <end position="52"/>
    </location>
    <ligand>
        <name>4-amino-2-methyl-5-(diphosphooxymethyl)pyrimidine</name>
        <dbReference type="ChEBI" id="CHEBI:57841"/>
    </ligand>
</feature>
<feature type="binding site" evidence="1">
    <location>
        <position position="84"/>
    </location>
    <ligand>
        <name>4-amino-2-methyl-5-(diphosphooxymethyl)pyrimidine</name>
        <dbReference type="ChEBI" id="CHEBI:57841"/>
    </ligand>
</feature>
<feature type="binding site" evidence="1">
    <location>
        <position position="85"/>
    </location>
    <ligand>
        <name>Mg(2+)</name>
        <dbReference type="ChEBI" id="CHEBI:18420"/>
    </ligand>
</feature>
<feature type="binding site" evidence="1">
    <location>
        <position position="104"/>
    </location>
    <ligand>
        <name>Mg(2+)</name>
        <dbReference type="ChEBI" id="CHEBI:18420"/>
    </ligand>
</feature>
<feature type="binding site" evidence="1">
    <location>
        <position position="123"/>
    </location>
    <ligand>
        <name>4-amino-2-methyl-5-(diphosphooxymethyl)pyrimidine</name>
        <dbReference type="ChEBI" id="CHEBI:57841"/>
    </ligand>
</feature>
<feature type="binding site" evidence="1">
    <location>
        <begin position="150"/>
        <end position="152"/>
    </location>
    <ligand>
        <name>2-[(2R,5Z)-2-carboxy-4-methylthiazol-5(2H)-ylidene]ethyl phosphate</name>
        <dbReference type="ChEBI" id="CHEBI:62899"/>
    </ligand>
</feature>
<feature type="binding site" evidence="1">
    <location>
        <position position="153"/>
    </location>
    <ligand>
        <name>4-amino-2-methyl-5-(diphosphooxymethyl)pyrimidine</name>
        <dbReference type="ChEBI" id="CHEBI:57841"/>
    </ligand>
</feature>
<feature type="binding site" evidence="1">
    <location>
        <position position="181"/>
    </location>
    <ligand>
        <name>2-[(2R,5Z)-2-carboxy-4-methylthiazol-5(2H)-ylidene]ethyl phosphate</name>
        <dbReference type="ChEBI" id="CHEBI:62899"/>
    </ligand>
</feature>
<feature type="binding site" evidence="1">
    <location>
        <begin position="199"/>
        <end position="200"/>
    </location>
    <ligand>
        <name>2-[(2R,5Z)-2-carboxy-4-methylthiazol-5(2H)-ylidene]ethyl phosphate</name>
        <dbReference type="ChEBI" id="CHEBI:62899"/>
    </ligand>
</feature>
<proteinExistence type="inferred from homology"/>
<reference key="1">
    <citation type="journal article" date="1997" name="Nature">
        <title>The complete genome sequence of the gastric pathogen Helicobacter pylori.</title>
        <authorList>
            <person name="Tomb J.-F."/>
            <person name="White O."/>
            <person name="Kerlavage A.R."/>
            <person name="Clayton R.A."/>
            <person name="Sutton G.G."/>
            <person name="Fleischmann R.D."/>
            <person name="Ketchum K.A."/>
            <person name="Klenk H.-P."/>
            <person name="Gill S.R."/>
            <person name="Dougherty B.A."/>
            <person name="Nelson K.E."/>
            <person name="Quackenbush J."/>
            <person name="Zhou L."/>
            <person name="Kirkness E.F."/>
            <person name="Peterson S.N."/>
            <person name="Loftus B.J."/>
            <person name="Richardson D.L."/>
            <person name="Dodson R.J."/>
            <person name="Khalak H.G."/>
            <person name="Glodek A."/>
            <person name="McKenney K."/>
            <person name="FitzGerald L.M."/>
            <person name="Lee N."/>
            <person name="Adams M.D."/>
            <person name="Hickey E.K."/>
            <person name="Berg D.E."/>
            <person name="Gocayne J.D."/>
            <person name="Utterback T.R."/>
            <person name="Peterson J.D."/>
            <person name="Kelley J.M."/>
            <person name="Cotton M.D."/>
            <person name="Weidman J.F."/>
            <person name="Fujii C."/>
            <person name="Bowman C."/>
            <person name="Watthey L."/>
            <person name="Wallin E."/>
            <person name="Hayes W.S."/>
            <person name="Borodovsky M."/>
            <person name="Karp P.D."/>
            <person name="Smith H.O."/>
            <person name="Fraser C.M."/>
            <person name="Venter J.C."/>
        </authorList>
    </citation>
    <scope>NUCLEOTIDE SEQUENCE [LARGE SCALE GENOMIC DNA]</scope>
    <source>
        <strain>ATCC 700392 / 26695</strain>
    </source>
</reference>